<dbReference type="EC" id="5.6.2.3" evidence="3"/>
<dbReference type="EMBL" id="CP017624">
    <property type="protein sequence ID" value="AOW27172.1"/>
    <property type="molecule type" value="Genomic_DNA"/>
</dbReference>
<dbReference type="RefSeq" id="XP_719450.1">
    <property type="nucleotide sequence ID" value="XM_714357.1"/>
</dbReference>
<dbReference type="SMR" id="Q5AD67"/>
<dbReference type="FunCoup" id="Q5AD67">
    <property type="interactions" value="1017"/>
</dbReference>
<dbReference type="STRING" id="237561.Q5AD67"/>
<dbReference type="EnsemblFungi" id="C2_01240C_A-T">
    <property type="protein sequence ID" value="C2_01240C_A-T-p1"/>
    <property type="gene ID" value="C2_01240C_A"/>
</dbReference>
<dbReference type="GeneID" id="3638794"/>
<dbReference type="KEGG" id="cal:CAALFM_C201240CA"/>
<dbReference type="CGD" id="CAL0000177726">
    <property type="gene designation" value="orf19.9551"/>
</dbReference>
<dbReference type="VEuPathDB" id="FungiDB:C2_01240C_A"/>
<dbReference type="eggNOG" id="KOG1133">
    <property type="taxonomic scope" value="Eukaryota"/>
</dbReference>
<dbReference type="HOGENOM" id="CLU_006515_2_0_1"/>
<dbReference type="InParanoid" id="Q5AD67"/>
<dbReference type="OrthoDB" id="267079at2759"/>
<dbReference type="PRO" id="PR:Q5AD67"/>
<dbReference type="Proteomes" id="UP000000559">
    <property type="component" value="Chromosome 2"/>
</dbReference>
<dbReference type="GO" id="GO:0000785">
    <property type="term" value="C:chromatin"/>
    <property type="evidence" value="ECO:0007669"/>
    <property type="project" value="EnsemblFungi"/>
</dbReference>
<dbReference type="GO" id="GO:0005634">
    <property type="term" value="C:nucleus"/>
    <property type="evidence" value="ECO:0000318"/>
    <property type="project" value="GO_Central"/>
</dbReference>
<dbReference type="GO" id="GO:0005524">
    <property type="term" value="F:ATP binding"/>
    <property type="evidence" value="ECO:0007669"/>
    <property type="project" value="UniProtKB-KW"/>
</dbReference>
<dbReference type="GO" id="GO:0016887">
    <property type="term" value="F:ATP hydrolysis activity"/>
    <property type="evidence" value="ECO:0007669"/>
    <property type="project" value="RHEA"/>
</dbReference>
<dbReference type="GO" id="GO:0003677">
    <property type="term" value="F:DNA binding"/>
    <property type="evidence" value="ECO:0007669"/>
    <property type="project" value="UniProtKB-KW"/>
</dbReference>
<dbReference type="GO" id="GO:0003678">
    <property type="term" value="F:DNA helicase activity"/>
    <property type="evidence" value="ECO:0000318"/>
    <property type="project" value="GO_Central"/>
</dbReference>
<dbReference type="GO" id="GO:0051536">
    <property type="term" value="F:iron-sulfur cluster binding"/>
    <property type="evidence" value="ECO:0007669"/>
    <property type="project" value="UniProtKB-KW"/>
</dbReference>
<dbReference type="GO" id="GO:0046872">
    <property type="term" value="F:metal ion binding"/>
    <property type="evidence" value="ECO:0007669"/>
    <property type="project" value="UniProtKB-KW"/>
</dbReference>
<dbReference type="GO" id="GO:0034085">
    <property type="term" value="P:establishment of sister chromatid cohesion"/>
    <property type="evidence" value="ECO:0000318"/>
    <property type="project" value="GO_Central"/>
</dbReference>
<dbReference type="GO" id="GO:0036297">
    <property type="term" value="P:interstrand cross-link repair"/>
    <property type="evidence" value="ECO:0007669"/>
    <property type="project" value="EnsemblFungi"/>
</dbReference>
<dbReference type="GO" id="GO:0031571">
    <property type="term" value="P:mitotic G1 DNA damage checkpoint signaling"/>
    <property type="evidence" value="ECO:0007669"/>
    <property type="project" value="EnsemblFungi"/>
</dbReference>
<dbReference type="GO" id="GO:0007064">
    <property type="term" value="P:mitotic sister chromatid cohesion"/>
    <property type="evidence" value="ECO:0007669"/>
    <property type="project" value="EnsemblFungi"/>
</dbReference>
<dbReference type="CDD" id="cd18788">
    <property type="entry name" value="SF2_C_XPD"/>
    <property type="match status" value="1"/>
</dbReference>
<dbReference type="FunFam" id="3.40.50.300:FF:003439">
    <property type="entry name" value="ATP-dependent DNA helicase CHL1"/>
    <property type="match status" value="1"/>
</dbReference>
<dbReference type="FunFam" id="3.40.50.300:FF:001372">
    <property type="entry name" value="ATP-dependent DNA helicase chl1"/>
    <property type="match status" value="1"/>
</dbReference>
<dbReference type="Gene3D" id="3.40.50.300">
    <property type="entry name" value="P-loop containing nucleotide triphosphate hydrolases"/>
    <property type="match status" value="3"/>
</dbReference>
<dbReference type="InterPro" id="IPR006555">
    <property type="entry name" value="ATP-dep_Helicase_C"/>
</dbReference>
<dbReference type="InterPro" id="IPR045028">
    <property type="entry name" value="DinG/Rad3-like"/>
</dbReference>
<dbReference type="InterPro" id="IPR002464">
    <property type="entry name" value="DNA/RNA_helicase_DEAH_CS"/>
</dbReference>
<dbReference type="InterPro" id="IPR014013">
    <property type="entry name" value="Helic_SF1/SF2_ATP-bd_DinG/Rad3"/>
</dbReference>
<dbReference type="InterPro" id="IPR006554">
    <property type="entry name" value="Helicase-like_DEXD_c2"/>
</dbReference>
<dbReference type="InterPro" id="IPR006935">
    <property type="entry name" value="Helicase/UvrB_N"/>
</dbReference>
<dbReference type="InterPro" id="IPR027417">
    <property type="entry name" value="P-loop_NTPase"/>
</dbReference>
<dbReference type="InterPro" id="IPR010614">
    <property type="entry name" value="RAD3-like_helicase_DEAD"/>
</dbReference>
<dbReference type="InterPro" id="IPR013020">
    <property type="entry name" value="Rad3/Chl1-like"/>
</dbReference>
<dbReference type="NCBIfam" id="TIGR00604">
    <property type="entry name" value="rad3"/>
    <property type="match status" value="1"/>
</dbReference>
<dbReference type="PANTHER" id="PTHR11472:SF41">
    <property type="entry name" value="ATP-DEPENDENT DNA HELICASE DDX11-RELATED"/>
    <property type="match status" value="1"/>
</dbReference>
<dbReference type="PANTHER" id="PTHR11472">
    <property type="entry name" value="DNA REPAIR DEAD HELICASE RAD3/XP-D SUBFAMILY MEMBER"/>
    <property type="match status" value="1"/>
</dbReference>
<dbReference type="Pfam" id="PF06733">
    <property type="entry name" value="DEAD_2"/>
    <property type="match status" value="1"/>
</dbReference>
<dbReference type="Pfam" id="PF13307">
    <property type="entry name" value="Helicase_C_2"/>
    <property type="match status" value="1"/>
</dbReference>
<dbReference type="Pfam" id="PF04851">
    <property type="entry name" value="ResIII"/>
    <property type="match status" value="1"/>
</dbReference>
<dbReference type="SMART" id="SM00488">
    <property type="entry name" value="DEXDc2"/>
    <property type="match status" value="1"/>
</dbReference>
<dbReference type="SMART" id="SM00491">
    <property type="entry name" value="HELICc2"/>
    <property type="match status" value="1"/>
</dbReference>
<dbReference type="SUPFAM" id="SSF52540">
    <property type="entry name" value="P-loop containing nucleoside triphosphate hydrolases"/>
    <property type="match status" value="3"/>
</dbReference>
<dbReference type="PROSITE" id="PS00690">
    <property type="entry name" value="DEAH_ATP_HELICASE"/>
    <property type="match status" value="1"/>
</dbReference>
<dbReference type="PROSITE" id="PS51193">
    <property type="entry name" value="HELICASE_ATP_BIND_2"/>
    <property type="match status" value="1"/>
</dbReference>
<organism>
    <name type="scientific">Candida albicans (strain SC5314 / ATCC MYA-2876)</name>
    <name type="common">Yeast</name>
    <dbReference type="NCBI Taxonomy" id="237561"/>
    <lineage>
        <taxon>Eukaryota</taxon>
        <taxon>Fungi</taxon>
        <taxon>Dikarya</taxon>
        <taxon>Ascomycota</taxon>
        <taxon>Saccharomycotina</taxon>
        <taxon>Pichiomycetes</taxon>
        <taxon>Debaryomycetaceae</taxon>
        <taxon>Candida/Lodderomyces clade</taxon>
        <taxon>Candida</taxon>
    </lineage>
</organism>
<name>CHL1_CANAL</name>
<protein>
    <recommendedName>
        <fullName evidence="2">ATP-dependent DNA helicase CHL1</fullName>
        <ecNumber evidence="3">5.6.2.3</ecNumber>
    </recommendedName>
    <alternativeName>
        <fullName evidence="2">Chromosome loss protein 1</fullName>
    </alternativeName>
    <alternativeName>
        <fullName evidence="6">DNA 5'-3' helicase CHL1</fullName>
    </alternativeName>
</protein>
<feature type="chain" id="PRO_0000351006" description="ATP-dependent DNA helicase CHL1">
    <location>
        <begin position="1"/>
        <end position="842"/>
    </location>
</feature>
<feature type="domain" description="Helicase ATP-binding" evidence="4">
    <location>
        <begin position="6"/>
        <end position="417"/>
    </location>
</feature>
<feature type="region of interest" description="Disordered" evidence="5">
    <location>
        <begin position="476"/>
        <end position="499"/>
    </location>
</feature>
<feature type="short sequence motif" description="DEAH box">
    <location>
        <begin position="359"/>
        <end position="362"/>
    </location>
</feature>
<feature type="compositionally biased region" description="Low complexity" evidence="5">
    <location>
        <begin position="489"/>
        <end position="499"/>
    </location>
</feature>
<feature type="binding site" evidence="4">
    <location>
        <begin position="42"/>
        <end position="49"/>
    </location>
    <ligand>
        <name>ATP</name>
        <dbReference type="ChEBI" id="CHEBI:30616"/>
    </ligand>
</feature>
<feature type="binding site" evidence="1">
    <location>
        <position position="248"/>
    </location>
    <ligand>
        <name>[4Fe-4S] cluster</name>
        <dbReference type="ChEBI" id="CHEBI:49883"/>
    </ligand>
</feature>
<feature type="binding site" evidence="1">
    <location>
        <position position="266"/>
    </location>
    <ligand>
        <name>[4Fe-4S] cluster</name>
        <dbReference type="ChEBI" id="CHEBI:49883"/>
    </ligand>
</feature>
<feature type="binding site" evidence="1">
    <location>
        <position position="276"/>
    </location>
    <ligand>
        <name>[4Fe-4S] cluster</name>
        <dbReference type="ChEBI" id="CHEBI:49883"/>
    </ligand>
</feature>
<feature type="binding site" evidence="1">
    <location>
        <position position="316"/>
    </location>
    <ligand>
        <name>[4Fe-4S] cluster</name>
        <dbReference type="ChEBI" id="CHEBI:49883"/>
    </ligand>
</feature>
<comment type="function">
    <text evidence="2">ATP-dependent DNA helicase important for chromosome transmission and normal cell cycle progression in G(2)/M (By similarity). May have a role in changing DNA topology to allow the loading of proteins involved in maintaining sister chromatid cohesion in the vicinity of the centromeres (By similarity). Has a specific role in chromosome segregation during meiosis II (By similarity).</text>
</comment>
<comment type="catalytic activity">
    <reaction evidence="3">
        <text>Couples ATP hydrolysis with the unwinding of duplex DNA at the replication fork by translocating in the 5'-3' direction. This creates two antiparallel DNA single strands (ssDNA). The leading ssDNA polymer is the template for DNA polymerase III holoenzyme which synthesizes a continuous strand.</text>
        <dbReference type="EC" id="5.6.2.3"/>
    </reaction>
</comment>
<comment type="catalytic activity">
    <reaction evidence="3">
        <text>ATP + H2O = ADP + phosphate + H(+)</text>
        <dbReference type="Rhea" id="RHEA:13065"/>
        <dbReference type="ChEBI" id="CHEBI:15377"/>
        <dbReference type="ChEBI" id="CHEBI:15378"/>
        <dbReference type="ChEBI" id="CHEBI:30616"/>
        <dbReference type="ChEBI" id="CHEBI:43474"/>
        <dbReference type="ChEBI" id="CHEBI:456216"/>
        <dbReference type="EC" id="5.6.2.3"/>
    </reaction>
</comment>
<comment type="cofactor">
    <cofactor evidence="1">
        <name>[4Fe-4S] cluster</name>
        <dbReference type="ChEBI" id="CHEBI:49883"/>
    </cofactor>
    <text evidence="1">Binds 1 [4Fe-4S] cluster.</text>
</comment>
<comment type="subcellular location">
    <subcellularLocation>
        <location evidence="2">Nucleus</location>
    </subcellularLocation>
</comment>
<comment type="similarity">
    <text evidence="6">Belongs to the DEAD box helicase family. DEAH subfamily. DDX11/CHL1 sub-subfamily.</text>
</comment>
<gene>
    <name type="primary">CHL1</name>
    <name type="ordered locus">CAALFM_C201240CA</name>
    <name type="ORF">CaO19.2000</name>
    <name type="ORF">CaO19.9551</name>
</gene>
<reference key="1">
    <citation type="journal article" date="2004" name="Proc. Natl. Acad. Sci. U.S.A.">
        <title>The diploid genome sequence of Candida albicans.</title>
        <authorList>
            <person name="Jones T."/>
            <person name="Federspiel N.A."/>
            <person name="Chibana H."/>
            <person name="Dungan J."/>
            <person name="Kalman S."/>
            <person name="Magee B.B."/>
            <person name="Newport G."/>
            <person name="Thorstenson Y.R."/>
            <person name="Agabian N."/>
            <person name="Magee P.T."/>
            <person name="Davis R.W."/>
            <person name="Scherer S."/>
        </authorList>
    </citation>
    <scope>NUCLEOTIDE SEQUENCE [LARGE SCALE GENOMIC DNA]</scope>
    <source>
        <strain>SC5314 / ATCC MYA-2876</strain>
    </source>
</reference>
<reference key="2">
    <citation type="journal article" date="2007" name="Genome Biol.">
        <title>Assembly of the Candida albicans genome into sixteen supercontigs aligned on the eight chromosomes.</title>
        <authorList>
            <person name="van het Hoog M."/>
            <person name="Rast T.J."/>
            <person name="Martchenko M."/>
            <person name="Grindle S."/>
            <person name="Dignard D."/>
            <person name="Hogues H."/>
            <person name="Cuomo C."/>
            <person name="Berriman M."/>
            <person name="Scherer S."/>
            <person name="Magee B.B."/>
            <person name="Whiteway M."/>
            <person name="Chibana H."/>
            <person name="Nantel A."/>
            <person name="Magee P.T."/>
        </authorList>
    </citation>
    <scope>GENOME REANNOTATION</scope>
    <source>
        <strain>SC5314 / ATCC MYA-2876</strain>
    </source>
</reference>
<reference key="3">
    <citation type="journal article" date="2013" name="Genome Biol.">
        <title>Assembly of a phased diploid Candida albicans genome facilitates allele-specific measurements and provides a simple model for repeat and indel structure.</title>
        <authorList>
            <person name="Muzzey D."/>
            <person name="Schwartz K."/>
            <person name="Weissman J.S."/>
            <person name="Sherlock G."/>
        </authorList>
    </citation>
    <scope>NUCLEOTIDE SEQUENCE [LARGE SCALE GENOMIC DNA]</scope>
    <scope>GENOME REANNOTATION</scope>
    <source>
        <strain>SC5314 / ATCC MYA-2876</strain>
    </source>
</reference>
<evidence type="ECO:0000250" key="1">
    <source>
        <dbReference type="UniProtKB" id="P18074"/>
    </source>
</evidence>
<evidence type="ECO:0000250" key="2">
    <source>
        <dbReference type="UniProtKB" id="P22516"/>
    </source>
</evidence>
<evidence type="ECO:0000250" key="3">
    <source>
        <dbReference type="UniProtKB" id="Q96FC9"/>
    </source>
</evidence>
<evidence type="ECO:0000255" key="4">
    <source>
        <dbReference type="PROSITE-ProRule" id="PRU00541"/>
    </source>
</evidence>
<evidence type="ECO:0000256" key="5">
    <source>
        <dbReference type="SAM" id="MobiDB-lite"/>
    </source>
</evidence>
<evidence type="ECO:0000305" key="6"/>
<keyword id="KW-0067">ATP-binding</keyword>
<keyword id="KW-0131">Cell cycle</keyword>
<keyword id="KW-0238">DNA-binding</keyword>
<keyword id="KW-0347">Helicase</keyword>
<keyword id="KW-0378">Hydrolase</keyword>
<keyword id="KW-0408">Iron</keyword>
<keyword id="KW-0411">Iron-sulfur</keyword>
<keyword id="KW-0413">Isomerase</keyword>
<keyword id="KW-0479">Metal-binding</keyword>
<keyword id="KW-0547">Nucleotide-binding</keyword>
<keyword id="KW-0539">Nucleus</keyword>
<keyword id="KW-1185">Reference proteome</keyword>
<accession>Q5AD67</accession>
<accession>A0A1D8PGA4</accession>
<sequence length="842" mass="97275">MVSESCSRNYNHPYTPYDIQIQLMDAIYNTIENGYKIGLFESPTGTGKTLSIICSSMTWLRTFKRNNTFLETNNEVEDVYESESEEDEPEWVKKAYQSSIVNRSKNKLIEYEHYLDKIEKEHAQNKRKEEELEIKVHKRRKAMTAAGTDLSEESYLPMDYYSDSEVGKIEDQNLAITKEINRLLKKVENKEEVSYINECPIKIFFSSRTHSQLNQFSSQLRLTNFQASFEDLEERTKYIPLGSRKQLCINEKVRSKGNDQSVNDACLDLQRETNGCQYLPKNYMMSSVTKEFADLSLAKIRDIEDLNELGIELNICPYYSVRKGIEMTEIISLPYQMIFQDTTRKILNLDIKDSIIIIDEAHNIIDVITSMYSIKITSDQLNKVIKSLKIYLNKFLKRLNSGNRINLMKLIKICQILLKFLNTNSEKVKSGDEVQIQDIFKDSTGDLVNIHKLDQFLTKSKIAYKIESYIEKTEMETDNGEKKGRITNSGGSSSSSSSSNPLLFTIIKFLRTLTNLSKEGKFFWDNENGTISLNYMLLDPSAVFKEIVDQAKCVLLCGGTMEPMSDYMDYLFPSVPTNKINTFACGHVIPKENLQVFPISQWNDTNFEFSYQKRNDSKQLMALGEFLIEITKRVPYGVVIFFPSYKYLDQVLQFWRDTKILTSIESEKTIFREPKDPSNVEKVLNEYGYLIQTERKGAILFSVVGGKMSEGINFSDDLARAVIMVGLPYPNAYSGEMVTKRKYIETSELSNGGTTTDAKEKSRNYYENLCMRAVNQSIGRSIRHINDYSIIYLVDRRFSTPRIQNKLSQWVKERISITTTNNNNNNSIYIMESTTDFFNIIR</sequence>
<proteinExistence type="inferred from homology"/>